<gene>
    <name evidence="1" type="primary">rnfD</name>
    <name type="ordered locus">Pmen_1401</name>
</gene>
<keyword id="KW-0997">Cell inner membrane</keyword>
<keyword id="KW-1003">Cell membrane</keyword>
<keyword id="KW-0249">Electron transport</keyword>
<keyword id="KW-0285">Flavoprotein</keyword>
<keyword id="KW-0288">FMN</keyword>
<keyword id="KW-0472">Membrane</keyword>
<keyword id="KW-0597">Phosphoprotein</keyword>
<keyword id="KW-1278">Translocase</keyword>
<keyword id="KW-0812">Transmembrane</keyword>
<keyword id="KW-1133">Transmembrane helix</keyword>
<keyword id="KW-0813">Transport</keyword>
<dbReference type="EC" id="7.-.-.-" evidence="1"/>
<dbReference type="EMBL" id="CP000680">
    <property type="protein sequence ID" value="ABP84166.1"/>
    <property type="molecule type" value="Genomic_DNA"/>
</dbReference>
<dbReference type="SMR" id="A4XS50"/>
<dbReference type="STRING" id="399739.Pmen_1401"/>
<dbReference type="KEGG" id="pmy:Pmen_1401"/>
<dbReference type="PATRIC" id="fig|399739.8.peg.1422"/>
<dbReference type="eggNOG" id="COG4658">
    <property type="taxonomic scope" value="Bacteria"/>
</dbReference>
<dbReference type="HOGENOM" id="CLU_042020_0_0_6"/>
<dbReference type="OrthoDB" id="9776359at2"/>
<dbReference type="GO" id="GO:0005886">
    <property type="term" value="C:plasma membrane"/>
    <property type="evidence" value="ECO:0007669"/>
    <property type="project" value="UniProtKB-SubCell"/>
</dbReference>
<dbReference type="GO" id="GO:0022900">
    <property type="term" value="P:electron transport chain"/>
    <property type="evidence" value="ECO:0007669"/>
    <property type="project" value="UniProtKB-UniRule"/>
</dbReference>
<dbReference type="GO" id="GO:0055085">
    <property type="term" value="P:transmembrane transport"/>
    <property type="evidence" value="ECO:0007669"/>
    <property type="project" value="InterPro"/>
</dbReference>
<dbReference type="HAMAP" id="MF_00462">
    <property type="entry name" value="RsxD_RnfD"/>
    <property type="match status" value="1"/>
</dbReference>
<dbReference type="InterPro" id="IPR004338">
    <property type="entry name" value="NqrB/RnfD"/>
</dbReference>
<dbReference type="InterPro" id="IPR011303">
    <property type="entry name" value="RnfD_bac"/>
</dbReference>
<dbReference type="NCBIfam" id="TIGR01946">
    <property type="entry name" value="rnfD"/>
    <property type="match status" value="1"/>
</dbReference>
<dbReference type="PANTHER" id="PTHR30578">
    <property type="entry name" value="ELECTRON TRANSPORT COMPLEX PROTEIN RNFD"/>
    <property type="match status" value="1"/>
</dbReference>
<dbReference type="PANTHER" id="PTHR30578:SF0">
    <property type="entry name" value="ION-TRANSLOCATING OXIDOREDUCTASE COMPLEX SUBUNIT D"/>
    <property type="match status" value="1"/>
</dbReference>
<dbReference type="Pfam" id="PF03116">
    <property type="entry name" value="NQR2_RnfD_RnfE"/>
    <property type="match status" value="1"/>
</dbReference>
<comment type="function">
    <text evidence="1">Part of a membrane-bound complex that couples electron transfer with translocation of ions across the membrane.</text>
</comment>
<comment type="cofactor">
    <cofactor evidence="1">
        <name>FMN</name>
        <dbReference type="ChEBI" id="CHEBI:58210"/>
    </cofactor>
</comment>
<comment type="subunit">
    <text evidence="1">The complex is composed of six subunits: RnfA, RnfB, RnfC, RnfD, RnfE and RnfG.</text>
</comment>
<comment type="subcellular location">
    <subcellularLocation>
        <location evidence="1">Cell inner membrane</location>
        <topology evidence="1">Multi-pass membrane protein</topology>
    </subcellularLocation>
</comment>
<comment type="similarity">
    <text evidence="1">Belongs to the NqrB/RnfD family.</text>
</comment>
<evidence type="ECO:0000255" key="1">
    <source>
        <dbReference type="HAMAP-Rule" id="MF_00462"/>
    </source>
</evidence>
<accession>A4XS50</accession>
<protein>
    <recommendedName>
        <fullName evidence="1">Ion-translocating oxidoreductase complex subunit D</fullName>
        <ecNumber evidence="1">7.-.-.-</ecNumber>
    </recommendedName>
    <alternativeName>
        <fullName evidence="1">Rnf electron transport complex subunit D</fullName>
    </alternativeName>
</protein>
<reference key="1">
    <citation type="submission" date="2007-04" db="EMBL/GenBank/DDBJ databases">
        <title>Complete sequence of Pseudomonas mendocina ymp.</title>
        <authorList>
            <consortium name="US DOE Joint Genome Institute"/>
            <person name="Copeland A."/>
            <person name="Lucas S."/>
            <person name="Lapidus A."/>
            <person name="Barry K."/>
            <person name="Glavina del Rio T."/>
            <person name="Dalin E."/>
            <person name="Tice H."/>
            <person name="Pitluck S."/>
            <person name="Kiss H."/>
            <person name="Brettin T."/>
            <person name="Detter J.C."/>
            <person name="Bruce D."/>
            <person name="Han C."/>
            <person name="Schmutz J."/>
            <person name="Larimer F."/>
            <person name="Land M."/>
            <person name="Hauser L."/>
            <person name="Kyrpides N."/>
            <person name="Mikhailova N."/>
            <person name="Hersman L."/>
            <person name="Dubois J."/>
            <person name="Maurice P."/>
            <person name="Richardson P."/>
        </authorList>
    </citation>
    <scope>NUCLEOTIDE SEQUENCE [LARGE SCALE GENOMIC DNA]</scope>
    <source>
        <strain>ymp</strain>
    </source>
</reference>
<sequence>MALPRITSPHAKGSNRTQQVMLQVLLATVPGILALTWLFGAGTLYNLALASLFALAFEAAILAARQRPLAFFLKDYSALVTAVLLALALPPYAPWWLTLIACGFAIVFGKQLYGGLGQNPFNPAMLGYVVVLISFPVEMTSWPAPHGVAALDGIKHILGIASLPDGWAQATALDALKVNKSLTIDELRAANPAFGHFGGAGSEAVNLAFLAGGLYLLHKRLITWHAPVGMLAALFVMSLLFWNGSGSDSNGSPLFHLLTGATMLGAFFIVTDPVSGATSNRGRLVFGIGVGVLVYVIRAWGGYPDAVAFAVLLMNLAAPTIDYYTRPRSYGHRKPNSGFKLGE</sequence>
<organism>
    <name type="scientific">Ectopseudomonas mendocina (strain ymp)</name>
    <name type="common">Pseudomonas mendocina</name>
    <dbReference type="NCBI Taxonomy" id="399739"/>
    <lineage>
        <taxon>Bacteria</taxon>
        <taxon>Pseudomonadati</taxon>
        <taxon>Pseudomonadota</taxon>
        <taxon>Gammaproteobacteria</taxon>
        <taxon>Pseudomonadales</taxon>
        <taxon>Pseudomonadaceae</taxon>
        <taxon>Ectopseudomonas</taxon>
    </lineage>
</organism>
<proteinExistence type="inferred from homology"/>
<name>RNFD_ECTM1</name>
<feature type="chain" id="PRO_1000081149" description="Ion-translocating oxidoreductase complex subunit D">
    <location>
        <begin position="1"/>
        <end position="343"/>
    </location>
</feature>
<feature type="transmembrane region" description="Helical" evidence="1">
    <location>
        <begin position="24"/>
        <end position="44"/>
    </location>
</feature>
<feature type="transmembrane region" description="Helical" evidence="1">
    <location>
        <begin position="45"/>
        <end position="65"/>
    </location>
</feature>
<feature type="transmembrane region" description="Helical" evidence="1">
    <location>
        <begin position="69"/>
        <end position="91"/>
    </location>
</feature>
<feature type="transmembrane region" description="Helical" evidence="1">
    <location>
        <begin position="124"/>
        <end position="144"/>
    </location>
</feature>
<feature type="transmembrane region" description="Helical" evidence="1">
    <location>
        <begin position="197"/>
        <end position="217"/>
    </location>
</feature>
<feature type="transmembrane region" description="Helical" evidence="1">
    <location>
        <begin position="221"/>
        <end position="241"/>
    </location>
</feature>
<feature type="transmembrane region" description="Helical" evidence="1">
    <location>
        <begin position="251"/>
        <end position="271"/>
    </location>
</feature>
<feature type="transmembrane region" description="Helical" evidence="1">
    <location>
        <begin position="284"/>
        <end position="304"/>
    </location>
</feature>
<feature type="transmembrane region" description="Helical" evidence="1">
    <location>
        <begin position="305"/>
        <end position="325"/>
    </location>
</feature>
<feature type="modified residue" description="FMN phosphoryl threonine" evidence="1">
    <location>
        <position position="171"/>
    </location>
</feature>